<feature type="chain" id="PRO_0000438757" description="Protein E8^E2C">
    <location>
        <begin position="1"/>
        <end position="307"/>
    </location>
</feature>
<feature type="region of interest" description="Disordered" evidence="2">
    <location>
        <begin position="1"/>
        <end position="208"/>
    </location>
</feature>
<feature type="compositionally biased region" description="Low complexity" evidence="2">
    <location>
        <begin position="20"/>
        <end position="37"/>
    </location>
</feature>
<feature type="compositionally biased region" description="Polar residues" evidence="2">
    <location>
        <begin position="38"/>
        <end position="51"/>
    </location>
</feature>
<feature type="compositionally biased region" description="Basic residues" evidence="2">
    <location>
        <begin position="74"/>
        <end position="88"/>
    </location>
</feature>
<feature type="compositionally biased region" description="Low complexity" evidence="2">
    <location>
        <begin position="89"/>
        <end position="107"/>
    </location>
</feature>
<feature type="compositionally biased region" description="Basic residues" evidence="2">
    <location>
        <begin position="110"/>
        <end position="141"/>
    </location>
</feature>
<feature type="compositionally biased region" description="Basic residues" evidence="2">
    <location>
        <begin position="152"/>
        <end position="170"/>
    </location>
</feature>
<dbReference type="EMBL" id="M12737">
    <property type="status" value="NOT_ANNOTATED_CDS"/>
    <property type="molecule type" value="Genomic_DNA"/>
</dbReference>
<dbReference type="SMR" id="P0DOD2"/>
<dbReference type="Proteomes" id="UP000009103">
    <property type="component" value="Segment"/>
</dbReference>
<dbReference type="GO" id="GO:0042025">
    <property type="term" value="C:host cell nucleus"/>
    <property type="evidence" value="ECO:0007669"/>
    <property type="project" value="UniProtKB-SubCell"/>
</dbReference>
<dbReference type="GO" id="GO:0003677">
    <property type="term" value="F:DNA binding"/>
    <property type="evidence" value="ECO:0007669"/>
    <property type="project" value="InterPro"/>
</dbReference>
<dbReference type="GO" id="GO:0003700">
    <property type="term" value="F:DNA-binding transcription factor activity"/>
    <property type="evidence" value="ECO:0007669"/>
    <property type="project" value="InterPro"/>
</dbReference>
<dbReference type="GO" id="GO:0006275">
    <property type="term" value="P:regulation of DNA replication"/>
    <property type="evidence" value="ECO:0007669"/>
    <property type="project" value="InterPro"/>
</dbReference>
<dbReference type="Gene3D" id="3.30.70.330">
    <property type="match status" value="1"/>
</dbReference>
<dbReference type="InterPro" id="IPR035975">
    <property type="entry name" value="E2/EBNA1_C_sf"/>
</dbReference>
<dbReference type="InterPro" id="IPR012677">
    <property type="entry name" value="Nucleotide-bd_a/b_plait_sf"/>
</dbReference>
<dbReference type="InterPro" id="IPR000427">
    <property type="entry name" value="Papillomavirus_E2_C"/>
</dbReference>
<dbReference type="Pfam" id="PF00511">
    <property type="entry name" value="PPV_E2_C"/>
    <property type="match status" value="1"/>
</dbReference>
<dbReference type="SUPFAM" id="SSF54957">
    <property type="entry name" value="Viral DNA-binding domain"/>
    <property type="match status" value="1"/>
</dbReference>
<accession>P0DOD2</accession>
<proteinExistence type="inferred from homology"/>
<name>VE8E2_HPV08</name>
<sequence length="307" mass="34362">MKLKMFLMSSTPPGSPPGQADTDTAAKTPTTSADSTSRQQRSPAKQPQQTETKGRRYGRRPSSRTRPQKEQRRSRSRHRTRSRSRSLSRVRAVGSTTVSRSRSSSLTKAVRPRSRSRSRGRATATSRRRAGRGSPRRRRSTSRSPSTNTFKRSQRGGGRRGRGRGSRGRRERSSSTSPTPTKRSRGESSRLRGVSPSEVGRSVQSVSAKHTGRLGRLLDEAIDPPVILVRGEANTLKCFRNRARVRYRGLFKYFSTTWSWVAGDSTERLGRSRMLILFTSAGQRKDFDETVKYPKGVDTSYGNLDSL</sequence>
<protein>
    <recommendedName>
        <fullName>Protein E8^E2C</fullName>
    </recommendedName>
</protein>
<keyword id="KW-1048">Host nucleus</keyword>
<comment type="function">
    <text evidence="1">Plays a role in limiting the replication of viral DNA in keratinocytes. Recruits the host NCoR/SMRT complex to viral replication foci to mediate repression of both viral replication and transcription.</text>
</comment>
<comment type="subcellular location">
    <subcellularLocation>
        <location evidence="1">Host nucleus</location>
    </subcellularLocation>
</comment>
<comment type="similarity">
    <text evidence="3">Belongs to the papillomaviridae E8^E2C protein family.</text>
</comment>
<evidence type="ECO:0000250" key="1">
    <source>
        <dbReference type="UniProtKB" id="P0DKA0"/>
    </source>
</evidence>
<evidence type="ECO:0000256" key="2">
    <source>
        <dbReference type="SAM" id="MobiDB-lite"/>
    </source>
</evidence>
<evidence type="ECO:0000305" key="3"/>
<reference key="1">
    <citation type="journal article" date="1986" name="J. Virol.">
        <title>Epidermodysplasia verruciformis-associated human papillomavirus 8: genomic sequence and comparative analysis.</title>
        <authorList>
            <person name="Fuchs P.G."/>
            <person name="Iftner T."/>
            <person name="Weninger J."/>
            <person name="Pfister H."/>
        </authorList>
    </citation>
    <scope>NUCLEOTIDE SEQUENCE [GENOMIC DNA]</scope>
</reference>
<organism>
    <name type="scientific">Human papillomavirus type 8</name>
    <dbReference type="NCBI Taxonomy" id="10579"/>
    <lineage>
        <taxon>Viruses</taxon>
        <taxon>Monodnaviria</taxon>
        <taxon>Shotokuvirae</taxon>
        <taxon>Cossaviricota</taxon>
        <taxon>Papovaviricetes</taxon>
        <taxon>Zurhausenvirales</taxon>
        <taxon>Papillomaviridae</taxon>
        <taxon>Firstpapillomavirinae</taxon>
        <taxon>Betapapillomavirus</taxon>
        <taxon>Betapapillomavirus 1</taxon>
    </lineage>
</organism>
<organismHost>
    <name type="scientific">Homo sapiens</name>
    <name type="common">Human</name>
    <dbReference type="NCBI Taxonomy" id="9606"/>
</organismHost>